<comment type="function">
    <text evidence="1">Enables the recognition and targeting of unfolded and aggregated proteins to the ClpC protease or to other proteins involved in proteolysis.</text>
</comment>
<comment type="subunit">
    <text evidence="1">Homodimer.</text>
</comment>
<comment type="domain">
    <text>The N-terminal domain probably binds unfolded/aggregated proteins; the C-terminal domain interacts with ClpC.</text>
</comment>
<comment type="similarity">
    <text evidence="1">Belongs to the MecA family.</text>
</comment>
<feature type="chain" id="PRO_1000164054" description="Adapter protein MecA">
    <location>
        <begin position="1"/>
        <end position="238"/>
    </location>
</feature>
<feature type="region of interest" description="Disordered" evidence="2">
    <location>
        <begin position="108"/>
        <end position="133"/>
    </location>
</feature>
<accession>B9DIR3</accession>
<dbReference type="EMBL" id="AM295250">
    <property type="protein sequence ID" value="CAL27512.1"/>
    <property type="molecule type" value="Genomic_DNA"/>
</dbReference>
<dbReference type="RefSeq" id="WP_015899855.1">
    <property type="nucleotide sequence ID" value="NC_012121.1"/>
</dbReference>
<dbReference type="SMR" id="B9DIR3"/>
<dbReference type="GeneID" id="93795536"/>
<dbReference type="KEGG" id="sca:SCA_0598"/>
<dbReference type="eggNOG" id="COG4862">
    <property type="taxonomic scope" value="Bacteria"/>
</dbReference>
<dbReference type="HOGENOM" id="CLU_071496_2_1_9"/>
<dbReference type="OrthoDB" id="2360201at2"/>
<dbReference type="BioCyc" id="SCAR396513:SCA_RS03050-MONOMER"/>
<dbReference type="Proteomes" id="UP000000444">
    <property type="component" value="Chromosome"/>
</dbReference>
<dbReference type="GO" id="GO:0030674">
    <property type="term" value="F:protein-macromolecule adaptor activity"/>
    <property type="evidence" value="ECO:0007669"/>
    <property type="project" value="UniProtKB-UniRule"/>
</dbReference>
<dbReference type="Gene3D" id="3.30.70.1950">
    <property type="match status" value="1"/>
</dbReference>
<dbReference type="HAMAP" id="MF_01124">
    <property type="entry name" value="MecA"/>
    <property type="match status" value="1"/>
</dbReference>
<dbReference type="InterPro" id="IPR038471">
    <property type="entry name" value="MecA_C_sf"/>
</dbReference>
<dbReference type="InterPro" id="IPR008681">
    <property type="entry name" value="Neg-reg_MecA"/>
</dbReference>
<dbReference type="NCBIfam" id="NF002642">
    <property type="entry name" value="PRK02315.1-3"/>
    <property type="match status" value="1"/>
</dbReference>
<dbReference type="NCBIfam" id="NF002644">
    <property type="entry name" value="PRK02315.1-5"/>
    <property type="match status" value="1"/>
</dbReference>
<dbReference type="PANTHER" id="PTHR39161">
    <property type="entry name" value="ADAPTER PROTEIN MECA"/>
    <property type="match status" value="1"/>
</dbReference>
<dbReference type="PANTHER" id="PTHR39161:SF1">
    <property type="entry name" value="ADAPTER PROTEIN MECA 1"/>
    <property type="match status" value="1"/>
</dbReference>
<dbReference type="Pfam" id="PF05389">
    <property type="entry name" value="MecA"/>
    <property type="match status" value="1"/>
</dbReference>
<dbReference type="PIRSF" id="PIRSF029008">
    <property type="entry name" value="MecA"/>
    <property type="match status" value="1"/>
</dbReference>
<sequence length="238" mass="28445">MRIERVDDTTVKLFITYGDIESRGFKREDLWTNRQRGEEFFWSMMEEINEEEDFVVEGPLWIQVHAFEKGVEVVISKSKNEEMMNMADDNMNNEFDRQLNELLEQSFEDENEESVQGNQQQRRSHASDHSKRARHTNGRLVIVKFEDLESVIDYAHHSNQPTDDFEDLLYMLNNEYYYAIHFDDNVGEEVINDFYSQLLEFTQPSDRSEMYLNDYAKIIMSHNVTAQVRRFFTDTEEI</sequence>
<organism>
    <name type="scientific">Staphylococcus carnosus (strain TM300)</name>
    <dbReference type="NCBI Taxonomy" id="396513"/>
    <lineage>
        <taxon>Bacteria</taxon>
        <taxon>Bacillati</taxon>
        <taxon>Bacillota</taxon>
        <taxon>Bacilli</taxon>
        <taxon>Bacillales</taxon>
        <taxon>Staphylococcaceae</taxon>
        <taxon>Staphylococcus</taxon>
    </lineage>
</organism>
<keyword id="KW-1185">Reference proteome</keyword>
<evidence type="ECO:0000255" key="1">
    <source>
        <dbReference type="HAMAP-Rule" id="MF_01124"/>
    </source>
</evidence>
<evidence type="ECO:0000256" key="2">
    <source>
        <dbReference type="SAM" id="MobiDB-lite"/>
    </source>
</evidence>
<name>MECA_STACT</name>
<protein>
    <recommendedName>
        <fullName evidence="1">Adapter protein MecA</fullName>
    </recommendedName>
</protein>
<proteinExistence type="inferred from homology"/>
<gene>
    <name evidence="1" type="primary">mecA</name>
    <name type="ordered locus">Sca_0598</name>
</gene>
<reference key="1">
    <citation type="journal article" date="2009" name="Appl. Environ. Microbiol.">
        <title>Genome analysis of the meat starter culture bacterium Staphylococcus carnosus TM300.</title>
        <authorList>
            <person name="Rosenstein R."/>
            <person name="Nerz C."/>
            <person name="Biswas L."/>
            <person name="Resch A."/>
            <person name="Raddatz G."/>
            <person name="Schuster S.C."/>
            <person name="Goetz F."/>
        </authorList>
    </citation>
    <scope>NUCLEOTIDE SEQUENCE [LARGE SCALE GENOMIC DNA]</scope>
    <source>
        <strain>TM300</strain>
    </source>
</reference>